<evidence type="ECO:0000255" key="1">
    <source>
        <dbReference type="HAMAP-Rule" id="MF_01365"/>
    </source>
</evidence>
<evidence type="ECO:0000305" key="2"/>
<feature type="chain" id="PRO_1000087062" description="Large ribosomal subunit protein uL6">
    <location>
        <begin position="1"/>
        <end position="177"/>
    </location>
</feature>
<accession>A9MSY3</accession>
<reference key="1">
    <citation type="submission" date="2007-11" db="EMBL/GenBank/DDBJ databases">
        <authorList>
            <consortium name="The Salmonella enterica serovar Paratyphi B Genome Sequencing Project"/>
            <person name="McClelland M."/>
            <person name="Sanderson E.K."/>
            <person name="Porwollik S."/>
            <person name="Spieth J."/>
            <person name="Clifton W.S."/>
            <person name="Fulton R."/>
            <person name="Cordes M."/>
            <person name="Wollam A."/>
            <person name="Shah N."/>
            <person name="Pepin K."/>
            <person name="Bhonagiri V."/>
            <person name="Nash W."/>
            <person name="Johnson M."/>
            <person name="Thiruvilangam P."/>
            <person name="Wilson R."/>
        </authorList>
    </citation>
    <scope>NUCLEOTIDE SEQUENCE [LARGE SCALE GENOMIC DNA]</scope>
    <source>
        <strain>ATCC BAA-1250 / SPB7</strain>
    </source>
</reference>
<organism>
    <name type="scientific">Salmonella paratyphi B (strain ATCC BAA-1250 / SPB7)</name>
    <dbReference type="NCBI Taxonomy" id="1016998"/>
    <lineage>
        <taxon>Bacteria</taxon>
        <taxon>Pseudomonadati</taxon>
        <taxon>Pseudomonadota</taxon>
        <taxon>Gammaproteobacteria</taxon>
        <taxon>Enterobacterales</taxon>
        <taxon>Enterobacteriaceae</taxon>
        <taxon>Salmonella</taxon>
    </lineage>
</organism>
<dbReference type="EMBL" id="CP000886">
    <property type="protein sequence ID" value="ABX69583.1"/>
    <property type="molecule type" value="Genomic_DNA"/>
</dbReference>
<dbReference type="RefSeq" id="WP_000091939.1">
    <property type="nucleotide sequence ID" value="NC_010102.1"/>
</dbReference>
<dbReference type="SMR" id="A9MSY3"/>
<dbReference type="KEGG" id="spq:SPAB_04266"/>
<dbReference type="PATRIC" id="fig|1016998.12.peg.4012"/>
<dbReference type="HOGENOM" id="CLU_065464_1_2_6"/>
<dbReference type="BioCyc" id="SENT1016998:SPAB_RS17360-MONOMER"/>
<dbReference type="Proteomes" id="UP000008556">
    <property type="component" value="Chromosome"/>
</dbReference>
<dbReference type="GO" id="GO:0022625">
    <property type="term" value="C:cytosolic large ribosomal subunit"/>
    <property type="evidence" value="ECO:0007669"/>
    <property type="project" value="TreeGrafter"/>
</dbReference>
<dbReference type="GO" id="GO:0019843">
    <property type="term" value="F:rRNA binding"/>
    <property type="evidence" value="ECO:0007669"/>
    <property type="project" value="UniProtKB-UniRule"/>
</dbReference>
<dbReference type="GO" id="GO:0003735">
    <property type="term" value="F:structural constituent of ribosome"/>
    <property type="evidence" value="ECO:0007669"/>
    <property type="project" value="InterPro"/>
</dbReference>
<dbReference type="GO" id="GO:0002181">
    <property type="term" value="P:cytoplasmic translation"/>
    <property type="evidence" value="ECO:0007669"/>
    <property type="project" value="TreeGrafter"/>
</dbReference>
<dbReference type="FunFam" id="3.90.930.12:FF:000001">
    <property type="entry name" value="50S ribosomal protein L6"/>
    <property type="match status" value="1"/>
</dbReference>
<dbReference type="FunFam" id="3.90.930.12:FF:000002">
    <property type="entry name" value="50S ribosomal protein L6"/>
    <property type="match status" value="1"/>
</dbReference>
<dbReference type="Gene3D" id="3.90.930.12">
    <property type="entry name" value="Ribosomal protein L6, alpha-beta domain"/>
    <property type="match status" value="2"/>
</dbReference>
<dbReference type="HAMAP" id="MF_01365_B">
    <property type="entry name" value="Ribosomal_uL6_B"/>
    <property type="match status" value="1"/>
</dbReference>
<dbReference type="InterPro" id="IPR000702">
    <property type="entry name" value="Ribosomal_uL6-like"/>
</dbReference>
<dbReference type="InterPro" id="IPR036789">
    <property type="entry name" value="Ribosomal_uL6-like_a/b-dom_sf"/>
</dbReference>
<dbReference type="InterPro" id="IPR020040">
    <property type="entry name" value="Ribosomal_uL6_a/b-dom"/>
</dbReference>
<dbReference type="InterPro" id="IPR019906">
    <property type="entry name" value="Ribosomal_uL6_bac-type"/>
</dbReference>
<dbReference type="InterPro" id="IPR002358">
    <property type="entry name" value="Ribosomal_uL6_CS"/>
</dbReference>
<dbReference type="NCBIfam" id="TIGR03654">
    <property type="entry name" value="L6_bact"/>
    <property type="match status" value="1"/>
</dbReference>
<dbReference type="PANTHER" id="PTHR11655">
    <property type="entry name" value="60S/50S RIBOSOMAL PROTEIN L6/L9"/>
    <property type="match status" value="1"/>
</dbReference>
<dbReference type="PANTHER" id="PTHR11655:SF14">
    <property type="entry name" value="LARGE RIBOSOMAL SUBUNIT PROTEIN UL6M"/>
    <property type="match status" value="1"/>
</dbReference>
<dbReference type="Pfam" id="PF00347">
    <property type="entry name" value="Ribosomal_L6"/>
    <property type="match status" value="2"/>
</dbReference>
<dbReference type="PIRSF" id="PIRSF002162">
    <property type="entry name" value="Ribosomal_L6"/>
    <property type="match status" value="1"/>
</dbReference>
<dbReference type="PRINTS" id="PR00059">
    <property type="entry name" value="RIBOSOMALL6"/>
</dbReference>
<dbReference type="SUPFAM" id="SSF56053">
    <property type="entry name" value="Ribosomal protein L6"/>
    <property type="match status" value="2"/>
</dbReference>
<dbReference type="PROSITE" id="PS00525">
    <property type="entry name" value="RIBOSOMAL_L6_1"/>
    <property type="match status" value="1"/>
</dbReference>
<keyword id="KW-0687">Ribonucleoprotein</keyword>
<keyword id="KW-0689">Ribosomal protein</keyword>
<keyword id="KW-0694">RNA-binding</keyword>
<keyword id="KW-0699">rRNA-binding</keyword>
<proteinExistence type="inferred from homology"/>
<name>RL6_SALPB</name>
<gene>
    <name evidence="1" type="primary">rplF</name>
    <name type="ordered locus">SPAB_04266</name>
</gene>
<sequence length="177" mass="18860">MSRVAKAPVVVPAGVDVKINGQVITIKGKNGELTRTLNDAVEVKHADNALTFGPRDGYADGWAQAGTARALLNSMVIGVTEGFTKKLQLVGVGYRAAVKGNVVNLSLGFSHPVDHQLPAGITAECPTQTEIVLKGADKQVIGQVAADLRAYRRPEPYKGKGVRYADEVVRTKEAKKK</sequence>
<protein>
    <recommendedName>
        <fullName evidence="1">Large ribosomal subunit protein uL6</fullName>
    </recommendedName>
    <alternativeName>
        <fullName evidence="2">50S ribosomal protein L6</fullName>
    </alternativeName>
</protein>
<comment type="function">
    <text evidence="1">This protein binds to the 23S rRNA, and is important in its secondary structure. It is located near the subunit interface in the base of the L7/L12 stalk, and near the tRNA binding site of the peptidyltransferase center.</text>
</comment>
<comment type="subunit">
    <text evidence="1">Part of the 50S ribosomal subunit.</text>
</comment>
<comment type="similarity">
    <text evidence="1">Belongs to the universal ribosomal protein uL6 family.</text>
</comment>